<keyword id="KW-0931">ER-Golgi transport</keyword>
<keyword id="KW-0333">Golgi apparatus</keyword>
<keyword id="KW-0342">GTP-binding</keyword>
<keyword id="KW-0378">Hydrolase</keyword>
<keyword id="KW-0449">Lipoprotein</keyword>
<keyword id="KW-0519">Myristate</keyword>
<keyword id="KW-0547">Nucleotide-binding</keyword>
<keyword id="KW-0653">Protein transport</keyword>
<keyword id="KW-0813">Transport</keyword>
<evidence type="ECO:0000250" key="1"/>
<evidence type="ECO:0000250" key="2">
    <source>
        <dbReference type="UniProtKB" id="P84077"/>
    </source>
</evidence>
<evidence type="ECO:0000255" key="3"/>
<evidence type="ECO:0000305" key="4"/>
<protein>
    <recommendedName>
        <fullName>ADP-ribosylation factor 1</fullName>
        <ecNumber evidence="2">3.6.5.2</ecNumber>
    </recommendedName>
</protein>
<dbReference type="EC" id="3.6.5.2" evidence="2"/>
<dbReference type="EMBL" id="U27120">
    <property type="protein sequence ID" value="AAA92566.1"/>
    <property type="molecule type" value="mRNA"/>
</dbReference>
<dbReference type="PIR" id="S66337">
    <property type="entry name" value="S66337"/>
</dbReference>
<dbReference type="SMR" id="P51821"/>
<dbReference type="PaxDb" id="3055-EDO96164"/>
<dbReference type="eggNOG" id="KOG0070">
    <property type="taxonomic scope" value="Eukaryota"/>
</dbReference>
<dbReference type="GO" id="GO:0005794">
    <property type="term" value="C:Golgi apparatus"/>
    <property type="evidence" value="ECO:0007669"/>
    <property type="project" value="UniProtKB-SubCell"/>
</dbReference>
<dbReference type="GO" id="GO:0005525">
    <property type="term" value="F:GTP binding"/>
    <property type="evidence" value="ECO:0007669"/>
    <property type="project" value="UniProtKB-KW"/>
</dbReference>
<dbReference type="GO" id="GO:0003924">
    <property type="term" value="F:GTPase activity"/>
    <property type="evidence" value="ECO:0007669"/>
    <property type="project" value="InterPro"/>
</dbReference>
<dbReference type="GO" id="GO:0015031">
    <property type="term" value="P:protein transport"/>
    <property type="evidence" value="ECO:0007669"/>
    <property type="project" value="UniProtKB-KW"/>
</dbReference>
<dbReference type="GO" id="GO:0016192">
    <property type="term" value="P:vesicle-mediated transport"/>
    <property type="evidence" value="ECO:0007669"/>
    <property type="project" value="UniProtKB-KW"/>
</dbReference>
<dbReference type="CDD" id="cd04150">
    <property type="entry name" value="Arf1_5_like"/>
    <property type="match status" value="1"/>
</dbReference>
<dbReference type="FunFam" id="3.40.50.300:FF:003500">
    <property type="entry name" value="ADP-ribosylation factor 1"/>
    <property type="match status" value="1"/>
</dbReference>
<dbReference type="Gene3D" id="3.40.50.300">
    <property type="entry name" value="P-loop containing nucleotide triphosphate hydrolases"/>
    <property type="match status" value="1"/>
</dbReference>
<dbReference type="InterPro" id="IPR045872">
    <property type="entry name" value="Arf1-5-like"/>
</dbReference>
<dbReference type="InterPro" id="IPR027417">
    <property type="entry name" value="P-loop_NTPase"/>
</dbReference>
<dbReference type="InterPro" id="IPR005225">
    <property type="entry name" value="Small_GTP-bd"/>
</dbReference>
<dbReference type="InterPro" id="IPR024156">
    <property type="entry name" value="Small_GTPase_ARF"/>
</dbReference>
<dbReference type="InterPro" id="IPR006689">
    <property type="entry name" value="Small_GTPase_ARF/SAR"/>
</dbReference>
<dbReference type="NCBIfam" id="TIGR00231">
    <property type="entry name" value="small_GTP"/>
    <property type="match status" value="1"/>
</dbReference>
<dbReference type="PANTHER" id="PTHR11711">
    <property type="entry name" value="ADP RIBOSYLATION FACTOR-RELATED"/>
    <property type="match status" value="1"/>
</dbReference>
<dbReference type="Pfam" id="PF00025">
    <property type="entry name" value="Arf"/>
    <property type="match status" value="1"/>
</dbReference>
<dbReference type="PRINTS" id="PR00328">
    <property type="entry name" value="SAR1GTPBP"/>
</dbReference>
<dbReference type="SMART" id="SM00177">
    <property type="entry name" value="ARF"/>
    <property type="match status" value="1"/>
</dbReference>
<dbReference type="SMART" id="SM00175">
    <property type="entry name" value="RAB"/>
    <property type="match status" value="1"/>
</dbReference>
<dbReference type="SMART" id="SM00178">
    <property type="entry name" value="SAR"/>
    <property type="match status" value="1"/>
</dbReference>
<dbReference type="SUPFAM" id="SSF52540">
    <property type="entry name" value="P-loop containing nucleoside triphosphate hydrolases"/>
    <property type="match status" value="1"/>
</dbReference>
<dbReference type="PROSITE" id="PS51417">
    <property type="entry name" value="ARF"/>
    <property type="match status" value="1"/>
</dbReference>
<reference key="1">
    <citation type="journal article" date="1995" name="Plant Mol. Biol.">
        <title>Novel aspects of the regulation of a cDNA (Arf1) from Chlamydomonas with high sequence identity to animal ADP-ribosylation factor 1.</title>
        <authorList>
            <person name="Memon A.R."/>
            <person name="Hwang S."/>
            <person name="Deshpande N."/>
            <person name="Thompson G.A."/>
            <person name="Herrin D.L."/>
        </authorList>
    </citation>
    <scope>NUCLEOTIDE SEQUENCE [MRNA]</scope>
    <source>
        <strain>21gr / CC-1039</strain>
    </source>
</reference>
<sequence length="181" mass="20703">MGLRFTKALSRLFGKKEMRILMVGLDAAGKTTILYKLKLGEIVTTIPTIGFNVETVEYKNISFTVWDVGGQDKIRPLWRHYFQNTQGLIFVVDSNDRERVVEARDELHRMLNEDELRDAVLLVFANKQDLPNAMNAAEITDKLGLHSLRQRHWYIQSTCATSGEGLYEGLDWLSNNLANKT</sequence>
<organism>
    <name type="scientific">Chlamydomonas reinhardtii</name>
    <name type="common">Chlamydomonas smithii</name>
    <dbReference type="NCBI Taxonomy" id="3055"/>
    <lineage>
        <taxon>Eukaryota</taxon>
        <taxon>Viridiplantae</taxon>
        <taxon>Chlorophyta</taxon>
        <taxon>core chlorophytes</taxon>
        <taxon>Chlorophyceae</taxon>
        <taxon>CS clade</taxon>
        <taxon>Chlamydomonadales</taxon>
        <taxon>Chlamydomonadaceae</taxon>
        <taxon>Chlamydomonas</taxon>
    </lineage>
</organism>
<gene>
    <name type="primary">ARF1</name>
</gene>
<feature type="initiator methionine" description="Removed" evidence="3">
    <location>
        <position position="1"/>
    </location>
</feature>
<feature type="chain" id="PRO_0000207433" description="ADP-ribosylation factor 1">
    <location>
        <begin position="2"/>
        <end position="181"/>
    </location>
</feature>
<feature type="binding site" evidence="1">
    <location>
        <begin position="24"/>
        <end position="31"/>
    </location>
    <ligand>
        <name>GTP</name>
        <dbReference type="ChEBI" id="CHEBI:37565"/>
    </ligand>
</feature>
<feature type="binding site" evidence="1">
    <location>
        <begin position="67"/>
        <end position="71"/>
    </location>
    <ligand>
        <name>GTP</name>
        <dbReference type="ChEBI" id="CHEBI:37565"/>
    </ligand>
</feature>
<feature type="binding site" evidence="1">
    <location>
        <begin position="126"/>
        <end position="129"/>
    </location>
    <ligand>
        <name>GTP</name>
        <dbReference type="ChEBI" id="CHEBI:37565"/>
    </ligand>
</feature>
<feature type="lipid moiety-binding region" description="N-myristoyl glycine" evidence="3">
    <location>
        <position position="2"/>
    </location>
</feature>
<name>ARF1_CHLRE</name>
<proteinExistence type="evidence at transcript level"/>
<comment type="function">
    <text>GTP-binding protein involved in protein trafficking; may modulate vesicle budding and uncoating within the Golgi apparatus.</text>
</comment>
<comment type="catalytic activity">
    <reaction evidence="2">
        <text>GTP + H2O = GDP + phosphate + H(+)</text>
        <dbReference type="Rhea" id="RHEA:19669"/>
        <dbReference type="ChEBI" id="CHEBI:15377"/>
        <dbReference type="ChEBI" id="CHEBI:15378"/>
        <dbReference type="ChEBI" id="CHEBI:37565"/>
        <dbReference type="ChEBI" id="CHEBI:43474"/>
        <dbReference type="ChEBI" id="CHEBI:58189"/>
        <dbReference type="EC" id="3.6.5.2"/>
    </reaction>
</comment>
<comment type="subcellular location">
    <subcellularLocation>
        <location>Golgi apparatus</location>
    </subcellularLocation>
</comment>
<comment type="similarity">
    <text evidence="4">Belongs to the small GTPase superfamily. Arf family.</text>
</comment>
<accession>P51821</accession>